<organism>
    <name type="scientific">Chlorobium limicola (strain DSM 245 / NBRC 103803 / 6330)</name>
    <dbReference type="NCBI Taxonomy" id="290315"/>
    <lineage>
        <taxon>Bacteria</taxon>
        <taxon>Pseudomonadati</taxon>
        <taxon>Chlorobiota</taxon>
        <taxon>Chlorobiia</taxon>
        <taxon>Chlorobiales</taxon>
        <taxon>Chlorobiaceae</taxon>
        <taxon>Chlorobium/Pelodictyon group</taxon>
        <taxon>Chlorobium</taxon>
    </lineage>
</organism>
<reference key="1">
    <citation type="submission" date="2008-05" db="EMBL/GenBank/DDBJ databases">
        <title>Complete sequence of Chlorobium limicola DSM 245.</title>
        <authorList>
            <consortium name="US DOE Joint Genome Institute"/>
            <person name="Lucas S."/>
            <person name="Copeland A."/>
            <person name="Lapidus A."/>
            <person name="Glavina del Rio T."/>
            <person name="Dalin E."/>
            <person name="Tice H."/>
            <person name="Bruce D."/>
            <person name="Goodwin L."/>
            <person name="Pitluck S."/>
            <person name="Schmutz J."/>
            <person name="Larimer F."/>
            <person name="Land M."/>
            <person name="Hauser L."/>
            <person name="Kyrpides N."/>
            <person name="Ovchinnikova G."/>
            <person name="Zhao F."/>
            <person name="Li T."/>
            <person name="Liu Z."/>
            <person name="Overmann J."/>
            <person name="Bryant D.A."/>
            <person name="Richardson P."/>
        </authorList>
    </citation>
    <scope>NUCLEOTIDE SEQUENCE [LARGE SCALE GENOMIC DNA]</scope>
    <source>
        <strain>DSM 245 / NBRC 103803 / 6330</strain>
    </source>
</reference>
<sequence length="465" mass="50058">MDVHGKKASIIGAKRSGVAAAELLAKSGAKVFVSELGEPGASEAERLADCGIPWEQDGHTDRVCDADFCVVSPGIPRTAGIIRRVLEQGIPLYSEIEAASWFCKARIAGITGTDGKTTTSTLLHRIAEADGMKNDYRAFSVGNIGVPFSSLVLDMAPADLAVVELSSYQLEGCETFRPDVSVITNITPDHLDRYNGDMQLYAAAKFRIYASQRASDTLVYNFDDPLLRAQFSGNGRGFPFRIVPFGIGNDVPGSGSEEAFFYDEGMIRHLTAKGISEVFSGEDFLKSSFRGRHNIYNALAALAAAAALGIEESVARKAISGFSGVEHRQEFVCSLDGVEWINDSKATNVNALLQALDAVPGSIVLIAGGRDKGNDYTVLFDVVRRKVVTVIAIGEAREKILQVFEGITRTAGADTLDDAVALARESAEKGQTVLFSPGCASFDMFENFEERGRLFKRSILALNPC</sequence>
<name>MURD_CHLL2</name>
<proteinExistence type="inferred from homology"/>
<feature type="chain" id="PRO_1000130837" description="UDP-N-acetylmuramoylalanine--D-glutamate ligase">
    <location>
        <begin position="1"/>
        <end position="465"/>
    </location>
</feature>
<feature type="binding site" evidence="1">
    <location>
        <begin position="112"/>
        <end position="118"/>
    </location>
    <ligand>
        <name>ATP</name>
        <dbReference type="ChEBI" id="CHEBI:30616"/>
    </ligand>
</feature>
<dbReference type="EC" id="6.3.2.9" evidence="1"/>
<dbReference type="EMBL" id="CP001097">
    <property type="protein sequence ID" value="ACD91522.1"/>
    <property type="molecule type" value="Genomic_DNA"/>
</dbReference>
<dbReference type="RefSeq" id="WP_012467386.1">
    <property type="nucleotide sequence ID" value="NC_010803.1"/>
</dbReference>
<dbReference type="SMR" id="B3EIL0"/>
<dbReference type="STRING" id="290315.Clim_2504"/>
<dbReference type="KEGG" id="cli:Clim_2504"/>
<dbReference type="eggNOG" id="COG0771">
    <property type="taxonomic scope" value="Bacteria"/>
</dbReference>
<dbReference type="HOGENOM" id="CLU_032540_0_0_10"/>
<dbReference type="OrthoDB" id="9809796at2"/>
<dbReference type="UniPathway" id="UPA00219"/>
<dbReference type="Proteomes" id="UP000008841">
    <property type="component" value="Chromosome"/>
</dbReference>
<dbReference type="GO" id="GO:0005737">
    <property type="term" value="C:cytoplasm"/>
    <property type="evidence" value="ECO:0007669"/>
    <property type="project" value="UniProtKB-SubCell"/>
</dbReference>
<dbReference type="GO" id="GO:0005524">
    <property type="term" value="F:ATP binding"/>
    <property type="evidence" value="ECO:0007669"/>
    <property type="project" value="UniProtKB-UniRule"/>
</dbReference>
<dbReference type="GO" id="GO:0008764">
    <property type="term" value="F:UDP-N-acetylmuramoylalanine-D-glutamate ligase activity"/>
    <property type="evidence" value="ECO:0007669"/>
    <property type="project" value="UniProtKB-UniRule"/>
</dbReference>
<dbReference type="GO" id="GO:0051301">
    <property type="term" value="P:cell division"/>
    <property type="evidence" value="ECO:0007669"/>
    <property type="project" value="UniProtKB-KW"/>
</dbReference>
<dbReference type="GO" id="GO:0071555">
    <property type="term" value="P:cell wall organization"/>
    <property type="evidence" value="ECO:0007669"/>
    <property type="project" value="UniProtKB-KW"/>
</dbReference>
<dbReference type="GO" id="GO:0009252">
    <property type="term" value="P:peptidoglycan biosynthetic process"/>
    <property type="evidence" value="ECO:0007669"/>
    <property type="project" value="UniProtKB-UniRule"/>
</dbReference>
<dbReference type="GO" id="GO:0008360">
    <property type="term" value="P:regulation of cell shape"/>
    <property type="evidence" value="ECO:0007669"/>
    <property type="project" value="UniProtKB-KW"/>
</dbReference>
<dbReference type="Gene3D" id="3.90.190.20">
    <property type="entry name" value="Mur ligase, C-terminal domain"/>
    <property type="match status" value="1"/>
</dbReference>
<dbReference type="Gene3D" id="3.40.1190.10">
    <property type="entry name" value="Mur-like, catalytic domain"/>
    <property type="match status" value="1"/>
</dbReference>
<dbReference type="Gene3D" id="3.40.50.720">
    <property type="entry name" value="NAD(P)-binding Rossmann-like Domain"/>
    <property type="match status" value="1"/>
</dbReference>
<dbReference type="HAMAP" id="MF_00639">
    <property type="entry name" value="MurD"/>
    <property type="match status" value="1"/>
</dbReference>
<dbReference type="InterPro" id="IPR036565">
    <property type="entry name" value="Mur-like_cat_sf"/>
</dbReference>
<dbReference type="InterPro" id="IPR004101">
    <property type="entry name" value="Mur_ligase_C"/>
</dbReference>
<dbReference type="InterPro" id="IPR036615">
    <property type="entry name" value="Mur_ligase_C_dom_sf"/>
</dbReference>
<dbReference type="InterPro" id="IPR013221">
    <property type="entry name" value="Mur_ligase_cen"/>
</dbReference>
<dbReference type="InterPro" id="IPR005762">
    <property type="entry name" value="MurD"/>
</dbReference>
<dbReference type="NCBIfam" id="TIGR01087">
    <property type="entry name" value="murD"/>
    <property type="match status" value="1"/>
</dbReference>
<dbReference type="PANTHER" id="PTHR43692">
    <property type="entry name" value="UDP-N-ACETYLMURAMOYLALANINE--D-GLUTAMATE LIGASE"/>
    <property type="match status" value="1"/>
</dbReference>
<dbReference type="PANTHER" id="PTHR43692:SF1">
    <property type="entry name" value="UDP-N-ACETYLMURAMOYLALANINE--D-GLUTAMATE LIGASE"/>
    <property type="match status" value="1"/>
</dbReference>
<dbReference type="Pfam" id="PF02875">
    <property type="entry name" value="Mur_ligase_C"/>
    <property type="match status" value="1"/>
</dbReference>
<dbReference type="Pfam" id="PF08245">
    <property type="entry name" value="Mur_ligase_M"/>
    <property type="match status" value="1"/>
</dbReference>
<dbReference type="Pfam" id="PF21377">
    <property type="entry name" value="MurD_N"/>
    <property type="match status" value="1"/>
</dbReference>
<dbReference type="SUPFAM" id="SSF51984">
    <property type="entry name" value="MurCD N-terminal domain"/>
    <property type="match status" value="1"/>
</dbReference>
<dbReference type="SUPFAM" id="SSF53623">
    <property type="entry name" value="MurD-like peptide ligases, catalytic domain"/>
    <property type="match status" value="1"/>
</dbReference>
<dbReference type="SUPFAM" id="SSF53244">
    <property type="entry name" value="MurD-like peptide ligases, peptide-binding domain"/>
    <property type="match status" value="1"/>
</dbReference>
<gene>
    <name evidence="1" type="primary">murD</name>
    <name type="ordered locus">Clim_2504</name>
</gene>
<protein>
    <recommendedName>
        <fullName evidence="1">UDP-N-acetylmuramoylalanine--D-glutamate ligase</fullName>
        <ecNumber evidence="1">6.3.2.9</ecNumber>
    </recommendedName>
    <alternativeName>
        <fullName evidence="1">D-glutamic acid-adding enzyme</fullName>
    </alternativeName>
    <alternativeName>
        <fullName evidence="1">UDP-N-acetylmuramoyl-L-alanyl-D-glutamate synthetase</fullName>
    </alternativeName>
</protein>
<keyword id="KW-0067">ATP-binding</keyword>
<keyword id="KW-0131">Cell cycle</keyword>
<keyword id="KW-0132">Cell division</keyword>
<keyword id="KW-0133">Cell shape</keyword>
<keyword id="KW-0961">Cell wall biogenesis/degradation</keyword>
<keyword id="KW-0963">Cytoplasm</keyword>
<keyword id="KW-0436">Ligase</keyword>
<keyword id="KW-0547">Nucleotide-binding</keyword>
<keyword id="KW-0573">Peptidoglycan synthesis</keyword>
<evidence type="ECO:0000255" key="1">
    <source>
        <dbReference type="HAMAP-Rule" id="MF_00639"/>
    </source>
</evidence>
<comment type="function">
    <text evidence="1">Cell wall formation. Catalyzes the addition of glutamate to the nucleotide precursor UDP-N-acetylmuramoyl-L-alanine (UMA).</text>
</comment>
<comment type="catalytic activity">
    <reaction evidence="1">
        <text>UDP-N-acetyl-alpha-D-muramoyl-L-alanine + D-glutamate + ATP = UDP-N-acetyl-alpha-D-muramoyl-L-alanyl-D-glutamate + ADP + phosphate + H(+)</text>
        <dbReference type="Rhea" id="RHEA:16429"/>
        <dbReference type="ChEBI" id="CHEBI:15378"/>
        <dbReference type="ChEBI" id="CHEBI:29986"/>
        <dbReference type="ChEBI" id="CHEBI:30616"/>
        <dbReference type="ChEBI" id="CHEBI:43474"/>
        <dbReference type="ChEBI" id="CHEBI:83898"/>
        <dbReference type="ChEBI" id="CHEBI:83900"/>
        <dbReference type="ChEBI" id="CHEBI:456216"/>
        <dbReference type="EC" id="6.3.2.9"/>
    </reaction>
</comment>
<comment type="pathway">
    <text evidence="1">Cell wall biogenesis; peptidoglycan biosynthesis.</text>
</comment>
<comment type="subcellular location">
    <subcellularLocation>
        <location evidence="1">Cytoplasm</location>
    </subcellularLocation>
</comment>
<comment type="similarity">
    <text evidence="1">Belongs to the MurCDEF family.</text>
</comment>
<accession>B3EIL0</accession>